<accession>Q92QZ2</accession>
<name>KGUA_RHIME</name>
<keyword id="KW-0067">ATP-binding</keyword>
<keyword id="KW-0963">Cytoplasm</keyword>
<keyword id="KW-0418">Kinase</keyword>
<keyword id="KW-0547">Nucleotide-binding</keyword>
<keyword id="KW-1185">Reference proteome</keyword>
<keyword id="KW-0808">Transferase</keyword>
<evidence type="ECO:0000255" key="1">
    <source>
        <dbReference type="HAMAP-Rule" id="MF_00328"/>
    </source>
</evidence>
<reference key="1">
    <citation type="journal article" date="2001" name="Proc. Natl. Acad. Sci. U.S.A.">
        <title>Analysis of the chromosome sequence of the legume symbiont Sinorhizobium meliloti strain 1021.</title>
        <authorList>
            <person name="Capela D."/>
            <person name="Barloy-Hubler F."/>
            <person name="Gouzy J."/>
            <person name="Bothe G."/>
            <person name="Ampe F."/>
            <person name="Batut J."/>
            <person name="Boistard P."/>
            <person name="Becker A."/>
            <person name="Boutry M."/>
            <person name="Cadieu E."/>
            <person name="Dreano S."/>
            <person name="Gloux S."/>
            <person name="Godrie T."/>
            <person name="Goffeau A."/>
            <person name="Kahn D."/>
            <person name="Kiss E."/>
            <person name="Lelaure V."/>
            <person name="Masuy D."/>
            <person name="Pohl T."/>
            <person name="Portetelle D."/>
            <person name="Puehler A."/>
            <person name="Purnelle B."/>
            <person name="Ramsperger U."/>
            <person name="Renard C."/>
            <person name="Thebault P."/>
            <person name="Vandenbol M."/>
            <person name="Weidner S."/>
            <person name="Galibert F."/>
        </authorList>
    </citation>
    <scope>NUCLEOTIDE SEQUENCE [LARGE SCALE GENOMIC DNA]</scope>
    <source>
        <strain>1021</strain>
    </source>
</reference>
<reference key="2">
    <citation type="journal article" date="2001" name="Science">
        <title>The composite genome of the legume symbiont Sinorhizobium meliloti.</title>
        <authorList>
            <person name="Galibert F."/>
            <person name="Finan T.M."/>
            <person name="Long S.R."/>
            <person name="Puehler A."/>
            <person name="Abola P."/>
            <person name="Ampe F."/>
            <person name="Barloy-Hubler F."/>
            <person name="Barnett M.J."/>
            <person name="Becker A."/>
            <person name="Boistard P."/>
            <person name="Bothe G."/>
            <person name="Boutry M."/>
            <person name="Bowser L."/>
            <person name="Buhrmester J."/>
            <person name="Cadieu E."/>
            <person name="Capela D."/>
            <person name="Chain P."/>
            <person name="Cowie A."/>
            <person name="Davis R.W."/>
            <person name="Dreano S."/>
            <person name="Federspiel N.A."/>
            <person name="Fisher R.F."/>
            <person name="Gloux S."/>
            <person name="Godrie T."/>
            <person name="Goffeau A."/>
            <person name="Golding B."/>
            <person name="Gouzy J."/>
            <person name="Gurjal M."/>
            <person name="Hernandez-Lucas I."/>
            <person name="Hong A."/>
            <person name="Huizar L."/>
            <person name="Hyman R.W."/>
            <person name="Jones T."/>
            <person name="Kahn D."/>
            <person name="Kahn M.L."/>
            <person name="Kalman S."/>
            <person name="Keating D.H."/>
            <person name="Kiss E."/>
            <person name="Komp C."/>
            <person name="Lelaure V."/>
            <person name="Masuy D."/>
            <person name="Palm C."/>
            <person name="Peck M.C."/>
            <person name="Pohl T.M."/>
            <person name="Portetelle D."/>
            <person name="Purnelle B."/>
            <person name="Ramsperger U."/>
            <person name="Surzycki R."/>
            <person name="Thebault P."/>
            <person name="Vandenbol M."/>
            <person name="Vorhoelter F.J."/>
            <person name="Weidner S."/>
            <person name="Wells D.H."/>
            <person name="Wong K."/>
            <person name="Yeh K.-C."/>
            <person name="Batut J."/>
        </authorList>
    </citation>
    <scope>NUCLEOTIDE SEQUENCE [LARGE SCALE GENOMIC DNA]</scope>
    <source>
        <strain>1021</strain>
    </source>
</reference>
<dbReference type="EC" id="2.7.4.8" evidence="1"/>
<dbReference type="EMBL" id="AL591688">
    <property type="protein sequence ID" value="CAC45726.1"/>
    <property type="molecule type" value="Genomic_DNA"/>
</dbReference>
<dbReference type="RefSeq" id="NP_385253.1">
    <property type="nucleotide sequence ID" value="NC_003047.1"/>
</dbReference>
<dbReference type="RefSeq" id="WP_003531657.1">
    <property type="nucleotide sequence ID" value="NC_003047.1"/>
</dbReference>
<dbReference type="SMR" id="Q92QZ2"/>
<dbReference type="EnsemblBacteria" id="CAC45726">
    <property type="protein sequence ID" value="CAC45726"/>
    <property type="gene ID" value="SMc00577"/>
</dbReference>
<dbReference type="KEGG" id="sme:SMc00577"/>
<dbReference type="PATRIC" id="fig|266834.11.peg.2556"/>
<dbReference type="eggNOG" id="COG0194">
    <property type="taxonomic scope" value="Bacteria"/>
</dbReference>
<dbReference type="HOGENOM" id="CLU_001715_1_0_5"/>
<dbReference type="OrthoDB" id="9808150at2"/>
<dbReference type="Proteomes" id="UP000001976">
    <property type="component" value="Chromosome"/>
</dbReference>
<dbReference type="GO" id="GO:0005829">
    <property type="term" value="C:cytosol"/>
    <property type="evidence" value="ECO:0007669"/>
    <property type="project" value="TreeGrafter"/>
</dbReference>
<dbReference type="GO" id="GO:0005524">
    <property type="term" value="F:ATP binding"/>
    <property type="evidence" value="ECO:0007669"/>
    <property type="project" value="UniProtKB-UniRule"/>
</dbReference>
<dbReference type="GO" id="GO:0004385">
    <property type="term" value="F:guanylate kinase activity"/>
    <property type="evidence" value="ECO:0007669"/>
    <property type="project" value="UniProtKB-UniRule"/>
</dbReference>
<dbReference type="CDD" id="cd00071">
    <property type="entry name" value="GMPK"/>
    <property type="match status" value="1"/>
</dbReference>
<dbReference type="FunFam" id="3.30.63.10:FF:000002">
    <property type="entry name" value="Guanylate kinase 1"/>
    <property type="match status" value="1"/>
</dbReference>
<dbReference type="Gene3D" id="3.30.63.10">
    <property type="entry name" value="Guanylate Kinase phosphate binding domain"/>
    <property type="match status" value="1"/>
</dbReference>
<dbReference type="Gene3D" id="3.40.50.300">
    <property type="entry name" value="P-loop containing nucleotide triphosphate hydrolases"/>
    <property type="match status" value="1"/>
</dbReference>
<dbReference type="HAMAP" id="MF_00328">
    <property type="entry name" value="Guanylate_kinase"/>
    <property type="match status" value="1"/>
</dbReference>
<dbReference type="InterPro" id="IPR008145">
    <property type="entry name" value="GK/Ca_channel_bsu"/>
</dbReference>
<dbReference type="InterPro" id="IPR008144">
    <property type="entry name" value="Guanylate_kin-like_dom"/>
</dbReference>
<dbReference type="InterPro" id="IPR017665">
    <property type="entry name" value="Guanylate_kinase"/>
</dbReference>
<dbReference type="InterPro" id="IPR020590">
    <property type="entry name" value="Guanylate_kinase_CS"/>
</dbReference>
<dbReference type="InterPro" id="IPR027417">
    <property type="entry name" value="P-loop_NTPase"/>
</dbReference>
<dbReference type="NCBIfam" id="TIGR03263">
    <property type="entry name" value="guanyl_kin"/>
    <property type="match status" value="1"/>
</dbReference>
<dbReference type="PANTHER" id="PTHR23117:SF13">
    <property type="entry name" value="GUANYLATE KINASE"/>
    <property type="match status" value="1"/>
</dbReference>
<dbReference type="PANTHER" id="PTHR23117">
    <property type="entry name" value="GUANYLATE KINASE-RELATED"/>
    <property type="match status" value="1"/>
</dbReference>
<dbReference type="Pfam" id="PF00625">
    <property type="entry name" value="Guanylate_kin"/>
    <property type="match status" value="1"/>
</dbReference>
<dbReference type="SMART" id="SM00072">
    <property type="entry name" value="GuKc"/>
    <property type="match status" value="1"/>
</dbReference>
<dbReference type="SUPFAM" id="SSF52540">
    <property type="entry name" value="P-loop containing nucleoside triphosphate hydrolases"/>
    <property type="match status" value="1"/>
</dbReference>
<dbReference type="PROSITE" id="PS00856">
    <property type="entry name" value="GUANYLATE_KINASE_1"/>
    <property type="match status" value="1"/>
</dbReference>
<dbReference type="PROSITE" id="PS50052">
    <property type="entry name" value="GUANYLATE_KINASE_2"/>
    <property type="match status" value="1"/>
</dbReference>
<protein>
    <recommendedName>
        <fullName evidence="1">Guanylate kinase</fullName>
        <ecNumber evidence="1">2.7.4.8</ecNumber>
    </recommendedName>
    <alternativeName>
        <fullName evidence="1">GMP kinase</fullName>
    </alternativeName>
</protein>
<organism>
    <name type="scientific">Rhizobium meliloti (strain 1021)</name>
    <name type="common">Ensifer meliloti</name>
    <name type="synonym">Sinorhizobium meliloti</name>
    <dbReference type="NCBI Taxonomy" id="266834"/>
    <lineage>
        <taxon>Bacteria</taxon>
        <taxon>Pseudomonadati</taxon>
        <taxon>Pseudomonadota</taxon>
        <taxon>Alphaproteobacteria</taxon>
        <taxon>Hyphomicrobiales</taxon>
        <taxon>Rhizobiaceae</taxon>
        <taxon>Sinorhizobium/Ensifer group</taxon>
        <taxon>Sinorhizobium</taxon>
    </lineage>
</organism>
<sequence length="219" mass="24847">MKPATVSPIKIARRGLMLVISSPSGAGKSTIARNLLEADPDLSISVSVTTRSRRPSEIEGRHYFFKSIREFEALRATDSLLEWAEVHGNYYGTPRDAVEKAMGEGRDMLFDIDWQGAQQLQEKMAGDVVSIFILPPSMAELQSRLHRRAEDSEEVIATRLANSRAEIEHWREYDYIVVNDDLDRAFSSVRAIVEAERLRRDRRPGLFEFVNGLLTENPL</sequence>
<proteinExistence type="inferred from homology"/>
<gene>
    <name evidence="1" type="primary">gmk</name>
    <name type="ordered locus">R01147</name>
    <name type="ORF">SMc00577</name>
</gene>
<feature type="chain" id="PRO_0000170592" description="Guanylate kinase">
    <location>
        <begin position="1"/>
        <end position="219"/>
    </location>
</feature>
<feature type="domain" description="Guanylate kinase-like" evidence="1">
    <location>
        <begin position="15"/>
        <end position="194"/>
    </location>
</feature>
<feature type="binding site" evidence="1">
    <location>
        <begin position="22"/>
        <end position="29"/>
    </location>
    <ligand>
        <name>ATP</name>
        <dbReference type="ChEBI" id="CHEBI:30616"/>
    </ligand>
</feature>
<comment type="function">
    <text evidence="1">Essential for recycling GMP and indirectly, cGMP.</text>
</comment>
<comment type="catalytic activity">
    <reaction evidence="1">
        <text>GMP + ATP = GDP + ADP</text>
        <dbReference type="Rhea" id="RHEA:20780"/>
        <dbReference type="ChEBI" id="CHEBI:30616"/>
        <dbReference type="ChEBI" id="CHEBI:58115"/>
        <dbReference type="ChEBI" id="CHEBI:58189"/>
        <dbReference type="ChEBI" id="CHEBI:456216"/>
        <dbReference type="EC" id="2.7.4.8"/>
    </reaction>
</comment>
<comment type="subcellular location">
    <subcellularLocation>
        <location evidence="1">Cytoplasm</location>
    </subcellularLocation>
</comment>
<comment type="similarity">
    <text evidence="1">Belongs to the guanylate kinase family.</text>
</comment>